<accession>A3N6X1</accession>
<proteinExistence type="inferred from homology"/>
<sequence>MQRHMLKSKIHRAAVTHCELHYEGSCAIDEDLLEAANIVENERIDIWNINNGERFSTYAIKGERGSGMISLNGSAARRAQLGDLVIIAAFAMIDEQELKAGWKPDLVFVDEDNKIKGSRDHVPTQNWT</sequence>
<dbReference type="EC" id="4.1.1.11" evidence="1"/>
<dbReference type="EMBL" id="CP000570">
    <property type="protein sequence ID" value="ABN81560.1"/>
    <property type="molecule type" value="Genomic_DNA"/>
</dbReference>
<dbReference type="RefSeq" id="WP_004534272.1">
    <property type="nucleotide sequence ID" value="NC_009074.1"/>
</dbReference>
<dbReference type="SMR" id="A3N6X1"/>
<dbReference type="GeneID" id="93059490"/>
<dbReference type="KEGG" id="bpd:BURPS668_1042"/>
<dbReference type="HOGENOM" id="CLU_115305_2_1_4"/>
<dbReference type="UniPathway" id="UPA00028">
    <property type="reaction ID" value="UER00002"/>
</dbReference>
<dbReference type="GO" id="GO:0005829">
    <property type="term" value="C:cytosol"/>
    <property type="evidence" value="ECO:0007669"/>
    <property type="project" value="TreeGrafter"/>
</dbReference>
<dbReference type="GO" id="GO:0004068">
    <property type="term" value="F:aspartate 1-decarboxylase activity"/>
    <property type="evidence" value="ECO:0007669"/>
    <property type="project" value="UniProtKB-UniRule"/>
</dbReference>
<dbReference type="GO" id="GO:0006523">
    <property type="term" value="P:alanine biosynthetic process"/>
    <property type="evidence" value="ECO:0007669"/>
    <property type="project" value="InterPro"/>
</dbReference>
<dbReference type="GO" id="GO:0015940">
    <property type="term" value="P:pantothenate biosynthetic process"/>
    <property type="evidence" value="ECO:0007669"/>
    <property type="project" value="UniProtKB-UniRule"/>
</dbReference>
<dbReference type="CDD" id="cd06919">
    <property type="entry name" value="Asp_decarbox"/>
    <property type="match status" value="1"/>
</dbReference>
<dbReference type="Gene3D" id="2.40.40.20">
    <property type="match status" value="1"/>
</dbReference>
<dbReference type="HAMAP" id="MF_00446">
    <property type="entry name" value="PanD"/>
    <property type="match status" value="1"/>
</dbReference>
<dbReference type="InterPro" id="IPR009010">
    <property type="entry name" value="Asp_de-COase-like_dom_sf"/>
</dbReference>
<dbReference type="InterPro" id="IPR003190">
    <property type="entry name" value="Asp_decarbox"/>
</dbReference>
<dbReference type="NCBIfam" id="TIGR00223">
    <property type="entry name" value="panD"/>
    <property type="match status" value="1"/>
</dbReference>
<dbReference type="PANTHER" id="PTHR21012">
    <property type="entry name" value="ASPARTATE 1-DECARBOXYLASE"/>
    <property type="match status" value="1"/>
</dbReference>
<dbReference type="PANTHER" id="PTHR21012:SF0">
    <property type="entry name" value="ASPARTATE 1-DECARBOXYLASE"/>
    <property type="match status" value="1"/>
</dbReference>
<dbReference type="Pfam" id="PF02261">
    <property type="entry name" value="Asp_decarbox"/>
    <property type="match status" value="1"/>
</dbReference>
<dbReference type="PIRSF" id="PIRSF006246">
    <property type="entry name" value="Asp_decarbox"/>
    <property type="match status" value="1"/>
</dbReference>
<dbReference type="SUPFAM" id="SSF50692">
    <property type="entry name" value="ADC-like"/>
    <property type="match status" value="1"/>
</dbReference>
<keyword id="KW-0068">Autocatalytic cleavage</keyword>
<keyword id="KW-0963">Cytoplasm</keyword>
<keyword id="KW-0210">Decarboxylase</keyword>
<keyword id="KW-0456">Lyase</keyword>
<keyword id="KW-0566">Pantothenate biosynthesis</keyword>
<keyword id="KW-0670">Pyruvate</keyword>
<keyword id="KW-0704">Schiff base</keyword>
<keyword id="KW-0865">Zymogen</keyword>
<name>PAND_BURP6</name>
<evidence type="ECO:0000255" key="1">
    <source>
        <dbReference type="HAMAP-Rule" id="MF_00446"/>
    </source>
</evidence>
<organism>
    <name type="scientific">Burkholderia pseudomallei (strain 668)</name>
    <dbReference type="NCBI Taxonomy" id="320373"/>
    <lineage>
        <taxon>Bacteria</taxon>
        <taxon>Pseudomonadati</taxon>
        <taxon>Pseudomonadota</taxon>
        <taxon>Betaproteobacteria</taxon>
        <taxon>Burkholderiales</taxon>
        <taxon>Burkholderiaceae</taxon>
        <taxon>Burkholderia</taxon>
        <taxon>pseudomallei group</taxon>
    </lineage>
</organism>
<gene>
    <name evidence="1" type="primary">panD</name>
    <name type="ordered locus">BURPS668_1042</name>
</gene>
<reference key="1">
    <citation type="journal article" date="2010" name="Genome Biol. Evol.">
        <title>Continuing evolution of Burkholderia mallei through genome reduction and large-scale rearrangements.</title>
        <authorList>
            <person name="Losada L."/>
            <person name="Ronning C.M."/>
            <person name="DeShazer D."/>
            <person name="Woods D."/>
            <person name="Fedorova N."/>
            <person name="Kim H.S."/>
            <person name="Shabalina S.A."/>
            <person name="Pearson T.R."/>
            <person name="Brinkac L."/>
            <person name="Tan P."/>
            <person name="Nandi T."/>
            <person name="Crabtree J."/>
            <person name="Badger J."/>
            <person name="Beckstrom-Sternberg S."/>
            <person name="Saqib M."/>
            <person name="Schutzer S.E."/>
            <person name="Keim P."/>
            <person name="Nierman W.C."/>
        </authorList>
    </citation>
    <scope>NUCLEOTIDE SEQUENCE [LARGE SCALE GENOMIC DNA]</scope>
    <source>
        <strain>668</strain>
    </source>
</reference>
<protein>
    <recommendedName>
        <fullName evidence="1">Aspartate 1-decarboxylase</fullName>
        <ecNumber evidence="1">4.1.1.11</ecNumber>
    </recommendedName>
    <alternativeName>
        <fullName evidence="1">Aspartate alpha-decarboxylase</fullName>
    </alternativeName>
    <component>
        <recommendedName>
            <fullName evidence="1">Aspartate 1-decarboxylase beta chain</fullName>
        </recommendedName>
    </component>
    <component>
        <recommendedName>
            <fullName evidence="1">Aspartate 1-decarboxylase alpha chain</fullName>
        </recommendedName>
    </component>
</protein>
<feature type="chain" id="PRO_1000026163" description="Aspartate 1-decarboxylase beta chain" evidence="1">
    <location>
        <begin position="1"/>
        <end position="24"/>
    </location>
</feature>
<feature type="chain" id="PRO_0000316054" description="Aspartate 1-decarboxylase alpha chain" evidence="1">
    <location>
        <begin position="25"/>
        <end position="128"/>
    </location>
</feature>
<feature type="active site" description="Schiff-base intermediate with substrate; via pyruvic acid" evidence="1">
    <location>
        <position position="25"/>
    </location>
</feature>
<feature type="active site" description="Proton donor" evidence="1">
    <location>
        <position position="58"/>
    </location>
</feature>
<feature type="binding site" evidence="1">
    <location>
        <position position="57"/>
    </location>
    <ligand>
        <name>substrate</name>
    </ligand>
</feature>
<feature type="binding site" evidence="1">
    <location>
        <begin position="73"/>
        <end position="75"/>
    </location>
    <ligand>
        <name>substrate</name>
    </ligand>
</feature>
<feature type="modified residue" description="Pyruvic acid (Ser)" evidence="1">
    <location>
        <position position="25"/>
    </location>
</feature>
<comment type="function">
    <text evidence="1">Catalyzes the pyruvoyl-dependent decarboxylation of aspartate to produce beta-alanine.</text>
</comment>
<comment type="catalytic activity">
    <reaction evidence="1">
        <text>L-aspartate + H(+) = beta-alanine + CO2</text>
        <dbReference type="Rhea" id="RHEA:19497"/>
        <dbReference type="ChEBI" id="CHEBI:15378"/>
        <dbReference type="ChEBI" id="CHEBI:16526"/>
        <dbReference type="ChEBI" id="CHEBI:29991"/>
        <dbReference type="ChEBI" id="CHEBI:57966"/>
        <dbReference type="EC" id="4.1.1.11"/>
    </reaction>
</comment>
<comment type="cofactor">
    <cofactor evidence="1">
        <name>pyruvate</name>
        <dbReference type="ChEBI" id="CHEBI:15361"/>
    </cofactor>
    <text evidence="1">Binds 1 pyruvoyl group covalently per subunit.</text>
</comment>
<comment type="pathway">
    <text evidence="1">Cofactor biosynthesis; (R)-pantothenate biosynthesis; beta-alanine from L-aspartate: step 1/1.</text>
</comment>
<comment type="subunit">
    <text evidence="1">Heterooctamer of four alpha and four beta subunits.</text>
</comment>
<comment type="subcellular location">
    <subcellularLocation>
        <location evidence="1">Cytoplasm</location>
    </subcellularLocation>
</comment>
<comment type="PTM">
    <text evidence="1">Is synthesized initially as an inactive proenzyme, which is activated by self-cleavage at a specific serine bond to produce a beta-subunit with a hydroxyl group at its C-terminus and an alpha-subunit with a pyruvoyl group at its N-terminus.</text>
</comment>
<comment type="similarity">
    <text evidence="1">Belongs to the PanD family.</text>
</comment>